<comment type="function">
    <text evidence="1">Stimulates gene expression driven by the HIV-2 LTR. Prevents infected cells from undergoing mitosis and proliferating, by inducing arrest or delay in the G2 phase of the cell cycle. Cell cycle arrest creates a favorable environment for maximizing viral expression and production (By similarity).</text>
</comment>
<comment type="subunit">
    <text evidence="1">Interacts with human UNG.</text>
</comment>
<comment type="subcellular location">
    <subcellularLocation>
        <location>Virion</location>
    </subcellularLocation>
    <subcellularLocation>
        <location evidence="1">Host nucleus</location>
    </subcellularLocation>
</comment>
<accession>P12521</accession>
<reference key="1">
    <citation type="journal article" date="1989" name="Nature">
        <title>An African primate lentivirus (SIVsm) closely related to HIV-2.</title>
        <authorList>
            <person name="Hirsch V.M."/>
            <person name="Olmstead R.A."/>
            <person name="Murphey-Corb M."/>
            <person name="Purcell R.H."/>
            <person name="Johnson P.R."/>
        </authorList>
    </citation>
    <scope>NUCLEOTIDE SEQUENCE [GENOMIC DNA]</scope>
</reference>
<evidence type="ECO:0000250" key="1"/>
<organism>
    <name type="scientific">Simian immunodeficiency virus (isolate F236/smH4)</name>
    <name type="common">SIV-sm</name>
    <name type="synonym">Simian immunodeficiency virus sooty mangabey monkey</name>
    <dbReference type="NCBI Taxonomy" id="11737"/>
    <lineage>
        <taxon>Viruses</taxon>
        <taxon>Riboviria</taxon>
        <taxon>Pararnavirae</taxon>
        <taxon>Artverviricota</taxon>
        <taxon>Revtraviricetes</taxon>
        <taxon>Ortervirales</taxon>
        <taxon>Retroviridae</taxon>
        <taxon>Orthoretrovirinae</taxon>
        <taxon>Lentivirus</taxon>
        <taxon>Simian immunodeficiency virus</taxon>
    </lineage>
</organism>
<organismHost>
    <name type="scientific">Cercopithecidae</name>
    <name type="common">Old World monkeys</name>
    <dbReference type="NCBI Taxonomy" id="9527"/>
</organismHost>
<keyword id="KW-0010">Activator</keyword>
<keyword id="KW-0014">AIDS</keyword>
<keyword id="KW-0131">Cell cycle</keyword>
<keyword id="KW-1048">Host nucleus</keyword>
<keyword id="KW-0945">Host-virus interaction</keyword>
<keyword id="KW-0597">Phosphoprotein</keyword>
<keyword id="KW-0804">Transcription</keyword>
<keyword id="KW-0805">Transcription regulation</keyword>
<keyword id="KW-1163">Viral penetration into host nucleus</keyword>
<keyword id="KW-0946">Virion</keyword>
<keyword id="KW-1160">Virus entry into host cell</keyword>
<gene>
    <name type="primary">vpr</name>
</gene>
<name>VPR_SIVS4</name>
<dbReference type="EMBL" id="X14307">
    <property type="protein sequence ID" value="CAA32486.1"/>
    <property type="molecule type" value="Genomic_DNA"/>
</dbReference>
<dbReference type="PIR" id="S07991">
    <property type="entry name" value="S07991"/>
</dbReference>
<dbReference type="SMR" id="P12521"/>
<dbReference type="Proteomes" id="UP000008173">
    <property type="component" value="Segment"/>
</dbReference>
<dbReference type="GO" id="GO:0043657">
    <property type="term" value="C:host cell"/>
    <property type="evidence" value="ECO:0007669"/>
    <property type="project" value="GOC"/>
</dbReference>
<dbReference type="GO" id="GO:0042025">
    <property type="term" value="C:host cell nucleus"/>
    <property type="evidence" value="ECO:0007669"/>
    <property type="project" value="UniProtKB-SubCell"/>
</dbReference>
<dbReference type="GO" id="GO:0044423">
    <property type="term" value="C:virion component"/>
    <property type="evidence" value="ECO:0007669"/>
    <property type="project" value="UniProtKB-KW"/>
</dbReference>
<dbReference type="GO" id="GO:0046718">
    <property type="term" value="P:symbiont entry into host cell"/>
    <property type="evidence" value="ECO:0007669"/>
    <property type="project" value="UniProtKB-KW"/>
</dbReference>
<dbReference type="GO" id="GO:0075732">
    <property type="term" value="P:viral penetration into host nucleus"/>
    <property type="evidence" value="ECO:0007669"/>
    <property type="project" value="UniProtKB-KW"/>
</dbReference>
<dbReference type="Gene3D" id="6.10.210.10">
    <property type="match status" value="1"/>
</dbReference>
<dbReference type="Gene3D" id="1.20.5.90">
    <property type="entry name" value="VpR/VpX protein, C-terminal domain"/>
    <property type="match status" value="1"/>
</dbReference>
<dbReference type="InterPro" id="IPR000012">
    <property type="entry name" value="RetroV_VpR/X"/>
</dbReference>
<dbReference type="Pfam" id="PF00522">
    <property type="entry name" value="VPR"/>
    <property type="match status" value="1"/>
</dbReference>
<dbReference type="PRINTS" id="PR00444">
    <property type="entry name" value="HIVVPRVPX"/>
</dbReference>
<protein>
    <recommendedName>
        <fullName>Protein Vpr</fullName>
    </recommendedName>
    <alternativeName>
        <fullName>R ORF protein</fullName>
    </alternativeName>
    <alternativeName>
        <fullName>Viral protein R</fullName>
    </alternativeName>
</protein>
<proteinExistence type="inferred from homology"/>
<feature type="chain" id="PRO_0000085469" description="Protein Vpr">
    <location>
        <begin position="1"/>
        <end position="89"/>
    </location>
</feature>
<feature type="modified residue" description="Phosphoserine; by host" evidence="1">
    <location>
        <position position="80"/>
    </location>
</feature>
<sequence length="89" mass="10280">MAERPPEDEAPQREPWDEWVVEVLEELKEEALKHFDPRLLTALGNYIYDRHGDTLEGAGELIRILQRALFIHFRSGCAHSRIGQSRGVL</sequence>